<evidence type="ECO:0000255" key="1">
    <source>
        <dbReference type="HAMAP-Rule" id="MF_00189"/>
    </source>
</evidence>
<protein>
    <recommendedName>
        <fullName evidence="1">Inner membrane-spanning protein YciB</fullName>
    </recommendedName>
</protein>
<keyword id="KW-0997">Cell inner membrane</keyword>
<keyword id="KW-1003">Cell membrane</keyword>
<keyword id="KW-0472">Membrane</keyword>
<keyword id="KW-0812">Transmembrane</keyword>
<keyword id="KW-1133">Transmembrane helix</keyword>
<gene>
    <name evidence="1" type="primary">yciB</name>
    <name type="ordered locus">Tcr_1232</name>
</gene>
<reference key="1">
    <citation type="journal article" date="2006" name="PLoS Biol.">
        <title>The genome of deep-sea vent chemolithoautotroph Thiomicrospira crunogena XCL-2.</title>
        <authorList>
            <person name="Scott K.M."/>
            <person name="Sievert S.M."/>
            <person name="Abril F.N."/>
            <person name="Ball L.A."/>
            <person name="Barrett C.J."/>
            <person name="Blake R.A."/>
            <person name="Boller A.J."/>
            <person name="Chain P.S.G."/>
            <person name="Clark J.A."/>
            <person name="Davis C.R."/>
            <person name="Detter C."/>
            <person name="Do K.F."/>
            <person name="Dobrinski K.P."/>
            <person name="Faza B.I."/>
            <person name="Fitzpatrick K.A."/>
            <person name="Freyermuth S.K."/>
            <person name="Harmer T.L."/>
            <person name="Hauser L.J."/>
            <person name="Huegler M."/>
            <person name="Kerfeld C.A."/>
            <person name="Klotz M.G."/>
            <person name="Kong W.W."/>
            <person name="Land M."/>
            <person name="Lapidus A."/>
            <person name="Larimer F.W."/>
            <person name="Longo D.L."/>
            <person name="Lucas S."/>
            <person name="Malfatti S.A."/>
            <person name="Massey S.E."/>
            <person name="Martin D.D."/>
            <person name="McCuddin Z."/>
            <person name="Meyer F."/>
            <person name="Moore J.L."/>
            <person name="Ocampo L.H. Jr."/>
            <person name="Paul J.H."/>
            <person name="Paulsen I.T."/>
            <person name="Reep D.K."/>
            <person name="Ren Q."/>
            <person name="Ross R.L."/>
            <person name="Sato P.Y."/>
            <person name="Thomas P."/>
            <person name="Tinkham L.E."/>
            <person name="Zeruth G.T."/>
        </authorList>
    </citation>
    <scope>NUCLEOTIDE SEQUENCE [LARGE SCALE GENOMIC DNA]</scope>
    <source>
        <strain>DSM 25203 / XCL-2</strain>
    </source>
</reference>
<comment type="function">
    <text evidence="1">Plays a role in cell envelope biogenesis, maintenance of cell envelope integrity and membrane homeostasis.</text>
</comment>
<comment type="subcellular location">
    <subcellularLocation>
        <location evidence="1">Cell inner membrane</location>
        <topology evidence="1">Multi-pass membrane protein</topology>
    </subcellularLocation>
</comment>
<comment type="similarity">
    <text evidence="1">Belongs to the YciB family.</text>
</comment>
<dbReference type="EMBL" id="CP000109">
    <property type="protein sequence ID" value="ABB41827.1"/>
    <property type="molecule type" value="Genomic_DNA"/>
</dbReference>
<dbReference type="STRING" id="317025.Tcr_1232"/>
<dbReference type="KEGG" id="tcx:Tcr_1232"/>
<dbReference type="eggNOG" id="COG2917">
    <property type="taxonomic scope" value="Bacteria"/>
</dbReference>
<dbReference type="HOGENOM" id="CLU_089554_2_0_6"/>
<dbReference type="OrthoDB" id="9788219at2"/>
<dbReference type="GO" id="GO:0005886">
    <property type="term" value="C:plasma membrane"/>
    <property type="evidence" value="ECO:0007669"/>
    <property type="project" value="UniProtKB-SubCell"/>
</dbReference>
<dbReference type="HAMAP" id="MF_00189">
    <property type="entry name" value="YciB"/>
    <property type="match status" value="1"/>
</dbReference>
<dbReference type="InterPro" id="IPR006008">
    <property type="entry name" value="YciB"/>
</dbReference>
<dbReference type="NCBIfam" id="TIGR00997">
    <property type="entry name" value="ispZ"/>
    <property type="match status" value="1"/>
</dbReference>
<dbReference type="NCBIfam" id="NF001325">
    <property type="entry name" value="PRK00259.1-3"/>
    <property type="match status" value="1"/>
</dbReference>
<dbReference type="PANTHER" id="PTHR36917:SF1">
    <property type="entry name" value="INNER MEMBRANE-SPANNING PROTEIN YCIB"/>
    <property type="match status" value="1"/>
</dbReference>
<dbReference type="PANTHER" id="PTHR36917">
    <property type="entry name" value="INTRACELLULAR SEPTATION PROTEIN A-RELATED"/>
    <property type="match status" value="1"/>
</dbReference>
<dbReference type="Pfam" id="PF04279">
    <property type="entry name" value="IspA"/>
    <property type="match status" value="1"/>
</dbReference>
<accession>Q31G96</accession>
<sequence length="214" mass="24361">MKLLFDLFPVILFFIAFKLYGIYVATAVAIIASIAQVAYVYAKNKRIEKMHIITLALIVILGGATLILQDETFIKWKPTVVNWGFALVFLGSHFIGQKPIIRRMMDQAISLPDTAWIKLSYMWIAFFIFSGIANIYVAYQYDTDTWVNFKLFGLMGLTLAFILIQGVYISRFIKSSDLDKNDETEEKVMDSTIETLAEVELDSVVDSKHDSKKS</sequence>
<feature type="chain" id="PRO_1000021070" description="Inner membrane-spanning protein YciB">
    <location>
        <begin position="1"/>
        <end position="214"/>
    </location>
</feature>
<feature type="transmembrane region" description="Helical" evidence="1">
    <location>
        <begin position="11"/>
        <end position="31"/>
    </location>
</feature>
<feature type="transmembrane region" description="Helical" evidence="1">
    <location>
        <begin position="50"/>
        <end position="70"/>
    </location>
</feature>
<feature type="transmembrane region" description="Helical" evidence="1">
    <location>
        <begin position="81"/>
        <end position="101"/>
    </location>
</feature>
<feature type="transmembrane region" description="Helical" evidence="1">
    <location>
        <begin position="119"/>
        <end position="139"/>
    </location>
</feature>
<feature type="transmembrane region" description="Helical" evidence="1">
    <location>
        <begin position="149"/>
        <end position="169"/>
    </location>
</feature>
<proteinExistence type="inferred from homology"/>
<name>YCIB_HYDCU</name>
<organism>
    <name type="scientific">Hydrogenovibrio crunogenus (strain DSM 25203 / XCL-2)</name>
    <name type="common">Thiomicrospira crunogena</name>
    <dbReference type="NCBI Taxonomy" id="317025"/>
    <lineage>
        <taxon>Bacteria</taxon>
        <taxon>Pseudomonadati</taxon>
        <taxon>Pseudomonadota</taxon>
        <taxon>Gammaproteobacteria</taxon>
        <taxon>Thiotrichales</taxon>
        <taxon>Piscirickettsiaceae</taxon>
        <taxon>Hydrogenovibrio</taxon>
    </lineage>
</organism>